<keyword id="KW-0249">Electron transport</keyword>
<keyword id="KW-0349">Heme</keyword>
<keyword id="KW-0408">Iron</keyword>
<keyword id="KW-0472">Membrane</keyword>
<keyword id="KW-0479">Metal-binding</keyword>
<keyword id="KW-0602">Photosynthesis</keyword>
<keyword id="KW-0604">Photosystem II</keyword>
<keyword id="KW-1185">Reference proteome</keyword>
<keyword id="KW-0793">Thylakoid</keyword>
<keyword id="KW-0812">Transmembrane</keyword>
<keyword id="KW-1133">Transmembrane helix</keyword>
<keyword id="KW-0813">Transport</keyword>
<reference key="1">
    <citation type="journal article" date="2001" name="DNA Res.">
        <title>Complete genomic sequence of the filamentous nitrogen-fixing cyanobacterium Anabaena sp. strain PCC 7120.</title>
        <authorList>
            <person name="Kaneko T."/>
            <person name="Nakamura Y."/>
            <person name="Wolk C.P."/>
            <person name="Kuritz T."/>
            <person name="Sasamoto S."/>
            <person name="Watanabe A."/>
            <person name="Iriguchi M."/>
            <person name="Ishikawa A."/>
            <person name="Kawashima K."/>
            <person name="Kimura T."/>
            <person name="Kishida Y."/>
            <person name="Kohara M."/>
            <person name="Matsumoto M."/>
            <person name="Matsuno A."/>
            <person name="Muraki A."/>
            <person name="Nakazaki N."/>
            <person name="Shimpo S."/>
            <person name="Sugimoto M."/>
            <person name="Takazawa M."/>
            <person name="Yamada M."/>
            <person name="Yasuda M."/>
            <person name="Tabata S."/>
        </authorList>
    </citation>
    <scope>NUCLEOTIDE SEQUENCE [LARGE SCALE GENOMIC DNA]</scope>
    <source>
        <strain>PCC 7120 / SAG 25.82 / UTEX 2576</strain>
    </source>
</reference>
<comment type="function">
    <text evidence="1">This b-type cytochrome is tightly associated with the reaction center of photosystem II (PSII). PSII is a light-driven water:plastoquinone oxidoreductase that uses light energy to abstract electrons from H(2)O, generating O(2) and a proton gradient subsequently used for ATP formation. It consists of a core antenna complex that captures photons, and an electron transfer chain that converts photonic excitation into a charge separation.</text>
</comment>
<comment type="cofactor">
    <cofactor evidence="1">
        <name>heme b</name>
        <dbReference type="ChEBI" id="CHEBI:60344"/>
    </cofactor>
    <text evidence="1">With its partner (PsbF) binds heme. PSII binds additional chlorophylls, carotenoids and specific lipids.</text>
</comment>
<comment type="subunit">
    <text evidence="1">Heterodimer of an alpha subunit and a beta subunit. PSII is composed of 1 copy each of membrane proteins PsbA, PsbB, PsbC, PsbD, PsbE, PsbF, PsbH, PsbI, PsbJ, PsbK, PsbL, PsbM, PsbT, PsbX, PsbY, PsbZ, Psb30/Ycf12, peripheral proteins PsbO, CyanoQ (PsbQ), PsbU, PsbV and a large number of cofactors. It forms dimeric complexes.</text>
</comment>
<comment type="subcellular location">
    <subcellularLocation>
        <location evidence="1">Cellular thylakoid membrane</location>
        <topology evidence="1">Single-pass membrane protein</topology>
    </subcellularLocation>
</comment>
<comment type="similarity">
    <text evidence="1">Belongs to the PsbE/PsbF family.</text>
</comment>
<feature type="chain" id="PRO_0000200342" description="Cytochrome b559 subunit alpha">
    <location>
        <begin position="1"/>
        <end position="82"/>
    </location>
</feature>
<feature type="transmembrane region" description="Helical" evidence="1">
    <location>
        <begin position="21"/>
        <end position="35"/>
    </location>
</feature>
<feature type="binding site" description="axial binding residue" evidence="1">
    <location>
        <position position="23"/>
    </location>
    <ligand>
        <name>heme</name>
        <dbReference type="ChEBI" id="CHEBI:30413"/>
        <note>ligand shared with beta subunit</note>
    </ligand>
    <ligandPart>
        <name>Fe</name>
        <dbReference type="ChEBI" id="CHEBI:18248"/>
    </ligandPart>
</feature>
<sequence>MSGTTGERPFSDIVTSIRYWVIHSITIPALFIAGWLFVSTGLAYDVFGTPRPDEYYTQARQELPIVNNRFEAKKQVEQLIQK</sequence>
<protein>
    <recommendedName>
        <fullName evidence="1">Cytochrome b559 subunit alpha</fullName>
    </recommendedName>
    <alternativeName>
        <fullName evidence="1">PSII reaction center subunit V</fullName>
    </alternativeName>
</protein>
<accession>Q8YQI2</accession>
<name>PSBE_NOSS1</name>
<organism>
    <name type="scientific">Nostoc sp. (strain PCC 7120 / SAG 25.82 / UTEX 2576)</name>
    <dbReference type="NCBI Taxonomy" id="103690"/>
    <lineage>
        <taxon>Bacteria</taxon>
        <taxon>Bacillati</taxon>
        <taxon>Cyanobacteriota</taxon>
        <taxon>Cyanophyceae</taxon>
        <taxon>Nostocales</taxon>
        <taxon>Nostocaceae</taxon>
        <taxon>Nostoc</taxon>
    </lineage>
</organism>
<proteinExistence type="inferred from homology"/>
<gene>
    <name evidence="1" type="primary">psbE</name>
    <name type="ordered locus">asr3845</name>
</gene>
<dbReference type="EMBL" id="BA000019">
    <property type="protein sequence ID" value="BAB75544.1"/>
    <property type="molecule type" value="Genomic_DNA"/>
</dbReference>
<dbReference type="PIR" id="AF2286">
    <property type="entry name" value="AF2286"/>
</dbReference>
<dbReference type="RefSeq" id="WP_010997986.1">
    <property type="nucleotide sequence ID" value="NZ_RSCN01000011.1"/>
</dbReference>
<dbReference type="SMR" id="Q8YQI2"/>
<dbReference type="STRING" id="103690.gene:10495887"/>
<dbReference type="GeneID" id="58724527"/>
<dbReference type="KEGG" id="ana:asr3845"/>
<dbReference type="eggNOG" id="ENOG5032RR6">
    <property type="taxonomic scope" value="Bacteria"/>
</dbReference>
<dbReference type="OrthoDB" id="514620at2"/>
<dbReference type="Proteomes" id="UP000002483">
    <property type="component" value="Chromosome"/>
</dbReference>
<dbReference type="GO" id="GO:0009539">
    <property type="term" value="C:photosystem II reaction center"/>
    <property type="evidence" value="ECO:0007669"/>
    <property type="project" value="InterPro"/>
</dbReference>
<dbReference type="GO" id="GO:0031676">
    <property type="term" value="C:plasma membrane-derived thylakoid membrane"/>
    <property type="evidence" value="ECO:0007669"/>
    <property type="project" value="UniProtKB-SubCell"/>
</dbReference>
<dbReference type="GO" id="GO:0009055">
    <property type="term" value="F:electron transfer activity"/>
    <property type="evidence" value="ECO:0007669"/>
    <property type="project" value="UniProtKB-UniRule"/>
</dbReference>
<dbReference type="GO" id="GO:0020037">
    <property type="term" value="F:heme binding"/>
    <property type="evidence" value="ECO:0007669"/>
    <property type="project" value="InterPro"/>
</dbReference>
<dbReference type="GO" id="GO:0005506">
    <property type="term" value="F:iron ion binding"/>
    <property type="evidence" value="ECO:0007669"/>
    <property type="project" value="UniProtKB-UniRule"/>
</dbReference>
<dbReference type="GO" id="GO:0009767">
    <property type="term" value="P:photosynthetic electron transport chain"/>
    <property type="evidence" value="ECO:0007669"/>
    <property type="project" value="InterPro"/>
</dbReference>
<dbReference type="Gene3D" id="1.20.5.860">
    <property type="entry name" value="Photosystem II cytochrome b559, alpha subunit"/>
    <property type="match status" value="1"/>
</dbReference>
<dbReference type="HAMAP" id="MF_00642">
    <property type="entry name" value="PSII_PsbE"/>
    <property type="match status" value="1"/>
</dbReference>
<dbReference type="InterPro" id="IPR006217">
    <property type="entry name" value="PSII_cyt_b559_asu"/>
</dbReference>
<dbReference type="InterPro" id="IPR037025">
    <property type="entry name" value="PSII_cyt_b559_asu_sf"/>
</dbReference>
<dbReference type="InterPro" id="IPR006216">
    <property type="entry name" value="PSII_cyt_b559_CS"/>
</dbReference>
<dbReference type="InterPro" id="IPR013081">
    <property type="entry name" value="PSII_cyt_b559_N"/>
</dbReference>
<dbReference type="InterPro" id="IPR013082">
    <property type="entry name" value="PSII_cytb559_asu_lum"/>
</dbReference>
<dbReference type="NCBIfam" id="TIGR01332">
    <property type="entry name" value="cyt_b559_alpha"/>
    <property type="match status" value="1"/>
</dbReference>
<dbReference type="PANTHER" id="PTHR33391">
    <property type="entry name" value="CYTOCHROME B559 SUBUNIT BETA-RELATED"/>
    <property type="match status" value="1"/>
</dbReference>
<dbReference type="PANTHER" id="PTHR33391:SF9">
    <property type="entry name" value="CYTOCHROME B559 SUBUNIT BETA-RELATED"/>
    <property type="match status" value="1"/>
</dbReference>
<dbReference type="Pfam" id="PF00283">
    <property type="entry name" value="Cytochrom_B559"/>
    <property type="match status" value="1"/>
</dbReference>
<dbReference type="Pfam" id="PF00284">
    <property type="entry name" value="Cytochrom_B559a"/>
    <property type="match status" value="1"/>
</dbReference>
<dbReference type="PIRSF" id="PIRSF000036">
    <property type="entry name" value="PsbE"/>
    <property type="match status" value="1"/>
</dbReference>
<dbReference type="SUPFAM" id="SSF161045">
    <property type="entry name" value="Cytochrome b559 subunits"/>
    <property type="match status" value="1"/>
</dbReference>
<dbReference type="PROSITE" id="PS00537">
    <property type="entry name" value="CYTOCHROME_B559"/>
    <property type="match status" value="1"/>
</dbReference>
<evidence type="ECO:0000255" key="1">
    <source>
        <dbReference type="HAMAP-Rule" id="MF_00642"/>
    </source>
</evidence>